<name>5HT3D_HUMAN</name>
<accession>Q70Z44</accession>
<accession>C9J2I6</accession>
<accession>J3QT78</accession>
<accession>Q495N5</accession>
<accession>Q495N6</accession>
<accession>Q7Z6B3</accession>
<proteinExistence type="evidence at protein level"/>
<feature type="signal peptide" evidence="3">
    <location>
        <begin position="1"/>
        <end position="24"/>
    </location>
</feature>
<feature type="chain" id="PRO_0000312293" description="5-hydroxytryptamine receptor 3D">
    <location>
        <begin position="25"/>
        <end position="454"/>
    </location>
</feature>
<feature type="topological domain" description="Extracellular" evidence="3">
    <location>
        <begin position="25"/>
        <end position="232"/>
    </location>
</feature>
<feature type="transmembrane region" description="Helical; Name=1" evidence="3">
    <location>
        <begin position="233"/>
        <end position="253"/>
    </location>
</feature>
<feature type="topological domain" description="Cytoplasmic" evidence="3">
    <location>
        <begin position="254"/>
        <end position="264"/>
    </location>
</feature>
<feature type="transmembrane region" description="Helical; Name=2" evidence="3">
    <location>
        <begin position="265"/>
        <end position="285"/>
    </location>
</feature>
<feature type="topological domain" description="Extracellular" evidence="3">
    <location>
        <begin position="286"/>
        <end position="306"/>
    </location>
</feature>
<feature type="transmembrane region" description="Helical; Name=3" evidence="3">
    <location>
        <begin position="307"/>
        <end position="327"/>
    </location>
</feature>
<feature type="topological domain" description="Cytoplasmic" evidence="3">
    <location>
        <begin position="328"/>
        <end position="431"/>
    </location>
</feature>
<feature type="transmembrane region" description="Helical; Name=4" evidence="3">
    <location>
        <begin position="432"/>
        <end position="452"/>
    </location>
</feature>
<feature type="topological domain" description="Extracellular" evidence="3">
    <location>
        <begin position="453"/>
        <end position="454"/>
    </location>
</feature>
<feature type="region of interest" description="Disordered" evidence="4">
    <location>
        <begin position="363"/>
        <end position="410"/>
    </location>
</feature>
<feature type="region of interest" description="HA-stretch; determines single-channel conductance in 5-HT3 receptors" evidence="2">
    <location>
        <begin position="399"/>
        <end position="430"/>
    </location>
</feature>
<feature type="glycosylation site" description="N-linked (GlcNAc...) asparagine" evidence="3">
    <location>
        <position position="66"/>
    </location>
</feature>
<feature type="splice variant" id="VSP_029797" description="In isoform 3." evidence="8">
    <location>
        <begin position="1"/>
        <end position="219"/>
    </location>
</feature>
<feature type="splice variant" id="VSP_029798" description="In isoform 2." evidence="8 9">
    <location>
        <begin position="1"/>
        <end position="135"/>
    </location>
</feature>
<feature type="splice variant" id="VSP_044828" description="In isoform 4." evidence="10">
    <original>MQKHSPGPPALALLSQSLLTTGNGDTLIINCPGFGQH</original>
    <variation>MERGWFHGKGFLLGFILHLLLQDSHLQLVTSFLWLNM</variation>
    <location>
        <begin position="1"/>
        <end position="37"/>
    </location>
</feature>
<feature type="splice variant" id="VSP_044829" description="In isoform 4." evidence="10">
    <location>
        <begin position="38"/>
        <end position="98"/>
    </location>
</feature>
<feature type="splice variant" id="VSP_044830" description="In isoform 4." evidence="10">
    <original>A</original>
    <variation>GERSPSALSPTQVT</variation>
    <location>
        <position position="171"/>
    </location>
</feature>
<feature type="splice variant" id="VSP_029799" description="In isoform 2." evidence="8 9">
    <original>RAWRRMSRSFQIHHRTSFRTRREWVLLGIQKRTIKVTVATNQYEQAIFH</original>
    <variation>ERSPSALSPTQ</variation>
    <location>
        <begin position="172"/>
        <end position="220"/>
    </location>
</feature>
<feature type="splice variant" id="VSP_029800" description="In isoform 3." evidence="8">
    <original>H</original>
    <variation>M</variation>
    <location>
        <position position="220"/>
    </location>
</feature>
<feature type="splice variant" id="VSP_029801" description="In isoform 2, isoform 3 and isoform 4." evidence="8 9">
    <original>APLALMQTPLPA</original>
    <variation>RPHPSRDQKR</variation>
    <location>
        <begin position="295"/>
        <end position="306"/>
    </location>
</feature>
<feature type="sequence variant" id="VAR_037478" description="In dbSNP:rs6443930." evidence="7">
    <original>A</original>
    <variation>G</variation>
    <location>
        <position position="171"/>
    </location>
</feature>
<feature type="sequence variant" id="VAR_037479" description="In dbSNP:rs1000952." evidence="6">
    <original>R</original>
    <variation>H</variation>
    <location>
        <position position="225"/>
    </location>
</feature>
<feature type="sequence variant" id="VAR_037480" description="In dbSNP:rs6789754." evidence="6">
    <original>R</original>
    <variation>H</variation>
    <location>
        <position position="435"/>
    </location>
</feature>
<feature type="sequence conflict" description="In Ref. 4; AAI01092." evidence="10" ref="4">
    <original>S</original>
    <variation>P</variation>
    <location>
        <position position="155"/>
    </location>
</feature>
<feature type="sequence conflict" description="In Ref. 2; AAO38166." evidence="10" ref="2">
    <original>K</original>
    <variation>R</variation>
    <location>
        <position position="368"/>
    </location>
</feature>
<protein>
    <recommendedName>
        <fullName evidence="11">5-hydroxytryptamine receptor 3D</fullName>
        <shortName>5-HT3-D</shortName>
        <shortName>5-HT3D</shortName>
    </recommendedName>
    <alternativeName>
        <fullName>Serotonin receptor 3D</fullName>
    </alternativeName>
</protein>
<organism>
    <name type="scientific">Homo sapiens</name>
    <name type="common">Human</name>
    <dbReference type="NCBI Taxonomy" id="9606"/>
    <lineage>
        <taxon>Eukaryota</taxon>
        <taxon>Metazoa</taxon>
        <taxon>Chordata</taxon>
        <taxon>Craniata</taxon>
        <taxon>Vertebrata</taxon>
        <taxon>Euteleostomi</taxon>
        <taxon>Mammalia</taxon>
        <taxon>Eutheria</taxon>
        <taxon>Euarchontoglires</taxon>
        <taxon>Primates</taxon>
        <taxon>Haplorrhini</taxon>
        <taxon>Catarrhini</taxon>
        <taxon>Hominidae</taxon>
        <taxon>Homo</taxon>
    </lineage>
</organism>
<keyword id="KW-0025">Alternative splicing</keyword>
<keyword id="KW-1003">Cell membrane</keyword>
<keyword id="KW-0325">Glycoprotein</keyword>
<keyword id="KW-0407">Ion channel</keyword>
<keyword id="KW-0406">Ion transport</keyword>
<keyword id="KW-1071">Ligand-gated ion channel</keyword>
<keyword id="KW-0472">Membrane</keyword>
<keyword id="KW-0628">Postsynaptic cell membrane</keyword>
<keyword id="KW-0675">Receptor</keyword>
<keyword id="KW-1185">Reference proteome</keyword>
<keyword id="KW-0732">Signal</keyword>
<keyword id="KW-0770">Synapse</keyword>
<keyword id="KW-0812">Transmembrane</keyword>
<keyword id="KW-1133">Transmembrane helix</keyword>
<keyword id="KW-0813">Transport</keyword>
<dbReference type="EMBL" id="AJ437318">
    <property type="protein sequence ID" value="CAD24817.1"/>
    <property type="molecule type" value="mRNA"/>
</dbReference>
<dbReference type="EMBL" id="AY159812">
    <property type="protein sequence ID" value="AAO38166.2"/>
    <property type="molecule type" value="mRNA"/>
</dbReference>
<dbReference type="EMBL" id="AC068644">
    <property type="status" value="NOT_ANNOTATED_CDS"/>
    <property type="molecule type" value="Genomic_DNA"/>
</dbReference>
<dbReference type="EMBL" id="AC131235">
    <property type="status" value="NOT_ANNOTATED_CDS"/>
    <property type="molecule type" value="Genomic_DNA"/>
</dbReference>
<dbReference type="EMBL" id="BC101090">
    <property type="protein sequence ID" value="AAI01091.1"/>
    <property type="molecule type" value="mRNA"/>
</dbReference>
<dbReference type="EMBL" id="BC101091">
    <property type="protein sequence ID" value="AAI01092.1"/>
    <property type="molecule type" value="mRNA"/>
</dbReference>
<dbReference type="CCDS" id="CCDS3249.1">
    <molecule id="Q70Z44-2"/>
</dbReference>
<dbReference type="CCDS" id="CCDS46966.1">
    <molecule id="Q70Z44-4"/>
</dbReference>
<dbReference type="CCDS" id="CCDS54685.1">
    <molecule id="Q70Z44-1"/>
</dbReference>
<dbReference type="CCDS" id="CCDS93429.1">
    <molecule id="Q70Z44-3"/>
</dbReference>
<dbReference type="RefSeq" id="NP_001138615.1">
    <molecule id="Q70Z44-4"/>
    <property type="nucleotide sequence ID" value="NM_001145143.1"/>
</dbReference>
<dbReference type="RefSeq" id="NP_001157118.1">
    <molecule id="Q70Z44-1"/>
    <property type="nucleotide sequence ID" value="NM_001163646.2"/>
</dbReference>
<dbReference type="RefSeq" id="NP_001397780.1">
    <molecule id="Q70Z44-3"/>
    <property type="nucleotide sequence ID" value="NM_001410851.1"/>
</dbReference>
<dbReference type="RefSeq" id="NP_872343.2">
    <property type="nucleotide sequence ID" value="NM_182537.2"/>
</dbReference>
<dbReference type="RefSeq" id="XP_016861343.1">
    <property type="nucleotide sequence ID" value="XM_017005854.1"/>
</dbReference>
<dbReference type="SMR" id="Q70Z44"/>
<dbReference type="BioGRID" id="128355">
    <property type="interactions" value="11"/>
</dbReference>
<dbReference type="ComplexPortal" id="CPX-272">
    <property type="entry name" value="5-hydroxytryptamine-3A/D receptor complex"/>
</dbReference>
<dbReference type="CORUM" id="Q70Z44"/>
<dbReference type="FunCoup" id="Q70Z44">
    <property type="interactions" value="192"/>
</dbReference>
<dbReference type="IntAct" id="Q70Z44">
    <property type="interactions" value="4"/>
</dbReference>
<dbReference type="STRING" id="9606.ENSP00000371929"/>
<dbReference type="BindingDB" id="Q70Z44"/>
<dbReference type="ChEMBL" id="CHEMBL2094132"/>
<dbReference type="DrugBank" id="DB01239">
    <property type="generic name" value="Chlorprothixene"/>
</dbReference>
<dbReference type="DrugBank" id="DB11273">
    <property type="generic name" value="Dihydroergocornine"/>
</dbReference>
<dbReference type="DrugBank" id="DB13345">
    <property type="generic name" value="Dihydroergocristine"/>
</dbReference>
<dbReference type="DrugBank" id="DB01049">
    <property type="generic name" value="Ergoloid mesylate"/>
</dbReference>
<dbReference type="DrugBank" id="DB00898">
    <property type="generic name" value="Ethanol"/>
</dbReference>
<dbReference type="DrugBank" id="DB12141">
    <property type="generic name" value="Gilteritinib"/>
</dbReference>
<dbReference type="DrugBank" id="DB00715">
    <property type="generic name" value="Paroxetine"/>
</dbReference>
<dbReference type="DrugBank" id="DB09304">
    <property type="generic name" value="Setiptiline"/>
</dbReference>
<dbReference type="DrugBank" id="DB13025">
    <property type="generic name" value="Tiapride"/>
</dbReference>
<dbReference type="DrugBank" id="DB00246">
    <property type="generic name" value="Ziprasidone"/>
</dbReference>
<dbReference type="DrugCentral" id="Q70Z44"/>
<dbReference type="TCDB" id="1.A.9.2.3">
    <property type="family name" value="the neurotransmitter receptor, cys loop, ligand-gated ion channel (lic) family"/>
</dbReference>
<dbReference type="GlyCosmos" id="Q70Z44">
    <property type="glycosylation" value="1 site, No reported glycans"/>
</dbReference>
<dbReference type="GlyGen" id="Q70Z44">
    <property type="glycosylation" value="1 site"/>
</dbReference>
<dbReference type="iPTMnet" id="Q70Z44"/>
<dbReference type="PhosphoSitePlus" id="Q70Z44"/>
<dbReference type="BioMuta" id="HTR3D"/>
<dbReference type="DMDM" id="338817899"/>
<dbReference type="jPOST" id="Q70Z44"/>
<dbReference type="MassIVE" id="Q70Z44"/>
<dbReference type="PaxDb" id="9606-ENSP00000371929"/>
<dbReference type="PeptideAtlas" id="Q70Z44"/>
<dbReference type="ProteomicsDB" id="68580">
    <molecule id="Q70Z44-1"/>
</dbReference>
<dbReference type="Antibodypedia" id="56799">
    <property type="antibodies" value="47 antibodies from 13 providers"/>
</dbReference>
<dbReference type="DNASU" id="200909"/>
<dbReference type="Ensembl" id="ENST00000382489.3">
    <molecule id="Q70Z44-1"/>
    <property type="protein sequence ID" value="ENSP00000371929.3"/>
    <property type="gene ID" value="ENSG00000186090.11"/>
</dbReference>
<dbReference type="Ensembl" id="ENST00000428798.7">
    <molecule id="Q70Z44-4"/>
    <property type="protein sequence ID" value="ENSP00000405409.2"/>
    <property type="gene ID" value="ENSG00000186090.11"/>
</dbReference>
<dbReference type="Ensembl" id="ENST00000453435.1">
    <molecule id="Q70Z44-3"/>
    <property type="protein sequence ID" value="ENSP00000389268.1"/>
    <property type="gene ID" value="ENSG00000186090.11"/>
</dbReference>
<dbReference type="GeneID" id="200909"/>
<dbReference type="KEGG" id="hsa:200909"/>
<dbReference type="MANE-Select" id="ENST00000428798.7">
    <molecule id="Q70Z44-4"/>
    <property type="protein sequence ID" value="ENSP00000405409.2"/>
    <property type="RefSeq nucleotide sequence ID" value="NM_001145143.1"/>
    <property type="RefSeq protein sequence ID" value="NP_001138615.1"/>
</dbReference>
<dbReference type="UCSC" id="uc010hxp.4">
    <molecule id="Q70Z44-1"/>
    <property type="organism name" value="human"/>
</dbReference>
<dbReference type="AGR" id="HGNC:24004"/>
<dbReference type="CTD" id="200909"/>
<dbReference type="DisGeNET" id="200909"/>
<dbReference type="GeneCards" id="HTR3D"/>
<dbReference type="HGNC" id="HGNC:24004">
    <property type="gene designation" value="HTR3D"/>
</dbReference>
<dbReference type="HPA" id="ENSG00000186090">
    <property type="expression patterns" value="Not detected"/>
</dbReference>
<dbReference type="MIM" id="610122">
    <property type="type" value="gene"/>
</dbReference>
<dbReference type="neXtProt" id="NX_Q70Z44"/>
<dbReference type="OpenTargets" id="ENSG00000186090"/>
<dbReference type="PharmGKB" id="PA134866755"/>
<dbReference type="VEuPathDB" id="HostDB:ENSG00000186090"/>
<dbReference type="eggNOG" id="KOG3645">
    <property type="taxonomic scope" value="Eukaryota"/>
</dbReference>
<dbReference type="GeneTree" id="ENSGT00940000156739"/>
<dbReference type="HOGENOM" id="CLU_018074_5_2_1"/>
<dbReference type="InParanoid" id="Q70Z44"/>
<dbReference type="OMA" id="WKCAGIT"/>
<dbReference type="OrthoDB" id="6097796at2759"/>
<dbReference type="PAN-GO" id="Q70Z44">
    <property type="GO annotations" value="11 GO annotations based on evolutionary models"/>
</dbReference>
<dbReference type="PhylomeDB" id="Q70Z44"/>
<dbReference type="TreeFam" id="TF315605"/>
<dbReference type="PathwayCommons" id="Q70Z44"/>
<dbReference type="Reactome" id="R-HSA-112314">
    <property type="pathway name" value="Neurotransmitter receptors and postsynaptic signal transmission"/>
</dbReference>
<dbReference type="SignaLink" id="Q70Z44"/>
<dbReference type="SIGNOR" id="Q70Z44"/>
<dbReference type="BioGRID-ORCS" id="200909">
    <property type="hits" value="15 hits in 1140 CRISPR screens"/>
</dbReference>
<dbReference type="ChiTaRS" id="HTR3D">
    <property type="organism name" value="human"/>
</dbReference>
<dbReference type="GeneWiki" id="HTR3D"/>
<dbReference type="GenomeRNAi" id="200909"/>
<dbReference type="Pharos" id="Q70Z44">
    <property type="development level" value="Tchem"/>
</dbReference>
<dbReference type="PRO" id="PR:Q70Z44"/>
<dbReference type="Proteomes" id="UP000005640">
    <property type="component" value="Chromosome 3"/>
</dbReference>
<dbReference type="RNAct" id="Q70Z44">
    <property type="molecule type" value="protein"/>
</dbReference>
<dbReference type="Bgee" id="ENSG00000186090">
    <property type="expression patterns" value="Expressed in primordial germ cell in gonad and 2 other cell types or tissues"/>
</dbReference>
<dbReference type="ExpressionAtlas" id="Q70Z44">
    <property type="expression patterns" value="baseline and differential"/>
</dbReference>
<dbReference type="GO" id="GO:0043005">
    <property type="term" value="C:neuron projection"/>
    <property type="evidence" value="ECO:0000318"/>
    <property type="project" value="GO_Central"/>
</dbReference>
<dbReference type="GO" id="GO:0005886">
    <property type="term" value="C:plasma membrane"/>
    <property type="evidence" value="ECO:0000314"/>
    <property type="project" value="UniProt"/>
</dbReference>
<dbReference type="GO" id="GO:0045211">
    <property type="term" value="C:postsynaptic membrane"/>
    <property type="evidence" value="ECO:0007669"/>
    <property type="project" value="UniProtKB-SubCell"/>
</dbReference>
<dbReference type="GO" id="GO:1904602">
    <property type="term" value="C:serotonin-activated cation-selective channel complex"/>
    <property type="evidence" value="ECO:0000353"/>
    <property type="project" value="ComplexPortal"/>
</dbReference>
<dbReference type="GO" id="GO:0045202">
    <property type="term" value="C:synapse"/>
    <property type="evidence" value="ECO:0000318"/>
    <property type="project" value="GO_Central"/>
</dbReference>
<dbReference type="GO" id="GO:1902495">
    <property type="term" value="C:transmembrane transporter complex"/>
    <property type="evidence" value="ECO:0000318"/>
    <property type="project" value="GO_Central"/>
</dbReference>
<dbReference type="GO" id="GO:0005231">
    <property type="term" value="F:excitatory extracellular ligand-gated monoatomic ion channel activity"/>
    <property type="evidence" value="ECO:0000318"/>
    <property type="project" value="GO_Central"/>
</dbReference>
<dbReference type="GO" id="GO:0022850">
    <property type="term" value="F:serotonin-gated monoatomic cation channel activity"/>
    <property type="evidence" value="ECO:0000314"/>
    <property type="project" value="CACAO"/>
</dbReference>
<dbReference type="GO" id="GO:1904315">
    <property type="term" value="F:transmitter-gated monoatomic ion channel activity involved in regulation of postsynaptic membrane potential"/>
    <property type="evidence" value="ECO:0000318"/>
    <property type="project" value="GO_Central"/>
</dbReference>
<dbReference type="GO" id="GO:0007268">
    <property type="term" value="P:chemical synaptic transmission"/>
    <property type="evidence" value="ECO:0000318"/>
    <property type="project" value="GO_Central"/>
</dbReference>
<dbReference type="GO" id="GO:0098662">
    <property type="term" value="P:inorganic cation transmembrane transport"/>
    <property type="evidence" value="ECO:0000314"/>
    <property type="project" value="ComplexPortal"/>
</dbReference>
<dbReference type="GO" id="GO:0034220">
    <property type="term" value="P:monoatomic ion transmembrane transport"/>
    <property type="evidence" value="ECO:0000318"/>
    <property type="project" value="GO_Central"/>
</dbReference>
<dbReference type="GO" id="GO:0042391">
    <property type="term" value="P:regulation of membrane potential"/>
    <property type="evidence" value="ECO:0000318"/>
    <property type="project" value="GO_Central"/>
</dbReference>
<dbReference type="GO" id="GO:0007210">
    <property type="term" value="P:serotonin receptor signaling pathway"/>
    <property type="evidence" value="ECO:0000314"/>
    <property type="project" value="ComplexPortal"/>
</dbReference>
<dbReference type="GO" id="GO:0140227">
    <property type="term" value="P:serotonin-gated cation-selective signaling pathway"/>
    <property type="evidence" value="ECO:0000314"/>
    <property type="project" value="UniProt"/>
</dbReference>
<dbReference type="CDD" id="cd19063">
    <property type="entry name" value="LGIC_TM_5-HT3"/>
    <property type="match status" value="1"/>
</dbReference>
<dbReference type="FunFam" id="1.20.58.390:FF:000143">
    <property type="entry name" value="5-hydroxytryptamine receptor 3D"/>
    <property type="match status" value="1"/>
</dbReference>
<dbReference type="Gene3D" id="2.70.170.10">
    <property type="entry name" value="Neurotransmitter-gated ion-channel ligand-binding domain"/>
    <property type="match status" value="1"/>
</dbReference>
<dbReference type="Gene3D" id="1.20.58.390">
    <property type="entry name" value="Neurotransmitter-gated ion-channel transmembrane domain"/>
    <property type="match status" value="1"/>
</dbReference>
<dbReference type="InterPro" id="IPR049944">
    <property type="entry name" value="LGIC_TM_5-HT3"/>
</dbReference>
<dbReference type="InterPro" id="IPR006202">
    <property type="entry name" value="Neur_chan_lig-bd"/>
</dbReference>
<dbReference type="InterPro" id="IPR036734">
    <property type="entry name" value="Neur_chan_lig-bd_sf"/>
</dbReference>
<dbReference type="InterPro" id="IPR006201">
    <property type="entry name" value="Neur_channel"/>
</dbReference>
<dbReference type="InterPro" id="IPR036719">
    <property type="entry name" value="Neuro-gated_channel_TM_sf"/>
</dbReference>
<dbReference type="InterPro" id="IPR038050">
    <property type="entry name" value="Neuro_actylchol_rec"/>
</dbReference>
<dbReference type="InterPro" id="IPR006029">
    <property type="entry name" value="Neurotrans-gated_channel_TM"/>
</dbReference>
<dbReference type="PANTHER" id="PTHR18945">
    <property type="entry name" value="NEUROTRANSMITTER GATED ION CHANNEL"/>
    <property type="match status" value="1"/>
</dbReference>
<dbReference type="Pfam" id="PF02931">
    <property type="entry name" value="Neur_chan_LBD"/>
    <property type="match status" value="1"/>
</dbReference>
<dbReference type="Pfam" id="PF02932">
    <property type="entry name" value="Neur_chan_memb"/>
    <property type="match status" value="1"/>
</dbReference>
<dbReference type="SUPFAM" id="SSF90112">
    <property type="entry name" value="Neurotransmitter-gated ion-channel transmembrane pore"/>
    <property type="match status" value="1"/>
</dbReference>
<dbReference type="SUPFAM" id="SSF63712">
    <property type="entry name" value="Nicotinic receptor ligand binding domain-like"/>
    <property type="match status" value="1"/>
</dbReference>
<comment type="function">
    <text evidence="7">Forms serotonin (5-hydroxytryptamine/5-HT3)-activated cation-selective channel complexes, which when activated cause fast, depolarizing responses in neurons.</text>
</comment>
<comment type="catalytic activity">
    <reaction evidence="2">
        <text>Na(+)(in) = Na(+)(out)</text>
        <dbReference type="Rhea" id="RHEA:34963"/>
        <dbReference type="ChEBI" id="CHEBI:29101"/>
    </reaction>
</comment>
<comment type="catalytic activity">
    <reaction evidence="2">
        <text>K(+)(in) = K(+)(out)</text>
        <dbReference type="Rhea" id="RHEA:29463"/>
        <dbReference type="ChEBI" id="CHEBI:29103"/>
    </reaction>
</comment>
<comment type="catalytic activity">
    <reaction evidence="7">
        <text>Ca(2+)(in) = Ca(2+)(out)</text>
        <dbReference type="Rhea" id="RHEA:29671"/>
        <dbReference type="ChEBI" id="CHEBI:29108"/>
    </reaction>
</comment>
<comment type="subunit">
    <text evidence="7">Forms homopentameric as well as heteropentameric serotonin-activated cation-selective channel complexes with HTR3A. The homomeric complex is not functional. Heteropentameric complexes display properties which resemble that of neuronal serotonin-activated channels in vivo.</text>
</comment>
<comment type="interaction">
    <interactant intactId="EBI-9008717">
        <id>Q70Z44</id>
    </interactant>
    <interactant intactId="EBI-9008743">
        <id>P46098</id>
        <label>HTR3A</label>
    </interactant>
    <organismsDiffer>false</organismsDiffer>
    <experiments>5</experiments>
</comment>
<comment type="subcellular location">
    <subcellularLocation>
        <location evidence="11">Postsynaptic cell membrane</location>
        <topology evidence="3">Multi-pass membrane protein</topology>
    </subcellularLocation>
    <subcellularLocation>
        <location evidence="7">Cell membrane</location>
        <topology evidence="3">Multi-pass membrane protein</topology>
    </subcellularLocation>
    <text evidence="7">Presumably retained within the endoplasmic reticulum unless complexed with HTR3A.</text>
</comment>
<comment type="alternative products">
    <event type="alternative splicing"/>
    <isoform>
        <id>Q70Z44-1</id>
        <name>1</name>
        <sequence type="displayed"/>
    </isoform>
    <isoform>
        <id>Q70Z44-2</id>
        <name>2</name>
        <sequence type="described" ref="VSP_029798 VSP_029799 VSP_029801"/>
    </isoform>
    <isoform>
        <id>Q70Z44-3</id>
        <name>3</name>
        <sequence type="described" ref="VSP_029797 VSP_029800 VSP_029801"/>
    </isoform>
    <isoform>
        <id>Q70Z44-4</id>
        <name>4</name>
        <sequence type="described" ref="VSP_044828 VSP_044829 VSP_044830 VSP_029801"/>
    </isoform>
</comment>
<comment type="tissue specificity">
    <text evidence="5">Expressed in liver, as well as fetal and adult colon and kidney.</text>
</comment>
<comment type="domain">
    <text evidence="1">The HA-stretch region of HTR3D seems to confer increased conductance to HTR3A/HTR3D heteropentamers compared to that of HTR3A homopentamers.</text>
</comment>
<comment type="similarity">
    <text evidence="10">Belongs to the ligand-gated ion channel (TC 1.A.9) family. 5-hydroxytryptamine receptor (TC 1.A.9.2) subfamily. HTR3D sub-subfamily.</text>
</comment>
<gene>
    <name evidence="12" type="primary">HTR3D</name>
</gene>
<reference key="1">
    <citation type="journal article" date="2003" name="Gene">
        <title>Cloning, physical mapping and expression analysis of the human 5-HT3 serotonin receptor-like genes HTR3C, HTR3D and HTR3E.</title>
        <authorList>
            <person name="Niesler B."/>
            <person name="Frank B."/>
            <person name="Kapeller J."/>
            <person name="Rappold G.A."/>
        </authorList>
    </citation>
    <scope>NUCLEOTIDE SEQUENCE [MRNA] (ISOFORM 1)</scope>
    <scope>TISSUE SPECIFICITY</scope>
</reference>
<reference key="2">
    <citation type="journal article" date="2007" name="Mol. Pharmacol.">
        <title>Characterization of the novel human serotonin receptor subunits 5-HT3C, 5-HT3D, and 5-HT3E.</title>
        <authorList>
            <person name="Niesler B."/>
            <person name="Walstab J."/>
            <person name="Combrink S."/>
            <person name="Moeller D."/>
            <person name="Kapeller J."/>
            <person name="Rietdorf J."/>
            <person name="Boenisch H."/>
            <person name="Goethert M."/>
            <person name="Rappold G."/>
            <person name="Bruess M."/>
        </authorList>
    </citation>
    <scope>NUCLEOTIDE SEQUENCE [MRNA] (ISOFORM 2)</scope>
    <scope>FUNCTION</scope>
    <scope>TRANSPORTER ACTIVITY</scope>
    <scope>SUBUNIT</scope>
    <scope>SUBCELLULAR LOCATION</scope>
    <scope>VARIANT GLY-171</scope>
</reference>
<reference key="3">
    <citation type="journal article" date="2006" name="Nature">
        <title>The DNA sequence, annotation and analysis of human chromosome 3.</title>
        <authorList>
            <person name="Muzny D.M."/>
            <person name="Scherer S.E."/>
            <person name="Kaul R."/>
            <person name="Wang J."/>
            <person name="Yu J."/>
            <person name="Sudbrak R."/>
            <person name="Buhay C.J."/>
            <person name="Chen R."/>
            <person name="Cree A."/>
            <person name="Ding Y."/>
            <person name="Dugan-Rocha S."/>
            <person name="Gill R."/>
            <person name="Gunaratne P."/>
            <person name="Harris R.A."/>
            <person name="Hawes A.C."/>
            <person name="Hernandez J."/>
            <person name="Hodgson A.V."/>
            <person name="Hume J."/>
            <person name="Jackson A."/>
            <person name="Khan Z.M."/>
            <person name="Kovar-Smith C."/>
            <person name="Lewis L.R."/>
            <person name="Lozado R.J."/>
            <person name="Metzker M.L."/>
            <person name="Milosavljevic A."/>
            <person name="Miner G.R."/>
            <person name="Morgan M.B."/>
            <person name="Nazareth L.V."/>
            <person name="Scott G."/>
            <person name="Sodergren E."/>
            <person name="Song X.-Z."/>
            <person name="Steffen D."/>
            <person name="Wei S."/>
            <person name="Wheeler D.A."/>
            <person name="Wright M.W."/>
            <person name="Worley K.C."/>
            <person name="Yuan Y."/>
            <person name="Zhang Z."/>
            <person name="Adams C.Q."/>
            <person name="Ansari-Lari M.A."/>
            <person name="Ayele M."/>
            <person name="Brown M.J."/>
            <person name="Chen G."/>
            <person name="Chen Z."/>
            <person name="Clendenning J."/>
            <person name="Clerc-Blankenburg K.P."/>
            <person name="Chen R."/>
            <person name="Chen Z."/>
            <person name="Davis C."/>
            <person name="Delgado O."/>
            <person name="Dinh H.H."/>
            <person name="Dong W."/>
            <person name="Draper H."/>
            <person name="Ernst S."/>
            <person name="Fu G."/>
            <person name="Gonzalez-Garay M.L."/>
            <person name="Garcia D.K."/>
            <person name="Gillett W."/>
            <person name="Gu J."/>
            <person name="Hao B."/>
            <person name="Haugen E."/>
            <person name="Havlak P."/>
            <person name="He X."/>
            <person name="Hennig S."/>
            <person name="Hu S."/>
            <person name="Huang W."/>
            <person name="Jackson L.R."/>
            <person name="Jacob L.S."/>
            <person name="Kelly S.H."/>
            <person name="Kube M."/>
            <person name="Levy R."/>
            <person name="Li Z."/>
            <person name="Liu B."/>
            <person name="Liu J."/>
            <person name="Liu W."/>
            <person name="Lu J."/>
            <person name="Maheshwari M."/>
            <person name="Nguyen B.-V."/>
            <person name="Okwuonu G.O."/>
            <person name="Palmeiri A."/>
            <person name="Pasternak S."/>
            <person name="Perez L.M."/>
            <person name="Phelps K.A."/>
            <person name="Plopper F.J."/>
            <person name="Qiang B."/>
            <person name="Raymond C."/>
            <person name="Rodriguez R."/>
            <person name="Saenphimmachak C."/>
            <person name="Santibanez J."/>
            <person name="Shen H."/>
            <person name="Shen Y."/>
            <person name="Subramanian S."/>
            <person name="Tabor P.E."/>
            <person name="Verduzco D."/>
            <person name="Waldron L."/>
            <person name="Wang J."/>
            <person name="Wang J."/>
            <person name="Wang Q."/>
            <person name="Williams G.A."/>
            <person name="Wong G.K.-S."/>
            <person name="Yao Z."/>
            <person name="Zhang J."/>
            <person name="Zhang X."/>
            <person name="Zhao G."/>
            <person name="Zhou J."/>
            <person name="Zhou Y."/>
            <person name="Nelson D."/>
            <person name="Lehrach H."/>
            <person name="Reinhardt R."/>
            <person name="Naylor S.L."/>
            <person name="Yang H."/>
            <person name="Olson M."/>
            <person name="Weinstock G."/>
            <person name="Gibbs R.A."/>
        </authorList>
    </citation>
    <scope>NUCLEOTIDE SEQUENCE [LARGE SCALE GENOMIC DNA]</scope>
</reference>
<reference key="4">
    <citation type="journal article" date="2004" name="Genome Res.">
        <title>The status, quality, and expansion of the NIH full-length cDNA project: the Mammalian Gene Collection (MGC).</title>
        <authorList>
            <consortium name="The MGC Project Team"/>
        </authorList>
    </citation>
    <scope>NUCLEOTIDE SEQUENCE [LARGE SCALE MRNA] (ISOFORMS 2 AND 3)</scope>
    <scope>VARIANTS HIS-225 AND HIS-435</scope>
</reference>
<evidence type="ECO:0000250" key="1">
    <source>
        <dbReference type="UniProtKB" id="O95264"/>
    </source>
</evidence>
<evidence type="ECO:0000250" key="2">
    <source>
        <dbReference type="UniProtKB" id="P46098"/>
    </source>
</evidence>
<evidence type="ECO:0000255" key="3"/>
<evidence type="ECO:0000256" key="4">
    <source>
        <dbReference type="SAM" id="MobiDB-lite"/>
    </source>
</evidence>
<evidence type="ECO:0000269" key="5">
    <source>
    </source>
</evidence>
<evidence type="ECO:0000269" key="6">
    <source>
    </source>
</evidence>
<evidence type="ECO:0000269" key="7">
    <source>
    </source>
</evidence>
<evidence type="ECO:0000303" key="8">
    <source>
    </source>
</evidence>
<evidence type="ECO:0000303" key="9">
    <source>
    </source>
</evidence>
<evidence type="ECO:0000305" key="10"/>
<evidence type="ECO:0000305" key="11">
    <source>
    </source>
</evidence>
<evidence type="ECO:0000312" key="12">
    <source>
        <dbReference type="HGNC" id="HGNC:24004"/>
    </source>
</evidence>
<sequence length="454" mass="50191">MQKHSPGPPALALLSQSLLTTGNGDTLIINCPGFGQHRVDPAAFQAVFDRKAIGPVTNYSVATHVNISFTLSAIWNCYSRIHTFNCHHARPWHNQFVQWNPDECGGIKKSGMATENLWLSDVFIEESVDQTPAGLMASMSIVKATSNTISQCGWSASANWTPSISPSMDRARAWRRMSRSFQIHHRTSFRTRREWVLLGIQKRTIKVTVATNQYEQAIFHVAIRRRCRPSPYVVNFLVPSGILIAIDALSFYLPLESGNCAPFKMTVLLGYSVFLLMMNDLLPATSTSSHASLVAPLALMQTPLPAGVYFALCLSLMVGSLLETIFITHLLHVATTQPLPLPRWLHSLLLHCTGQGRCCPTAPQKGNKGPGLTPTHLPGVKEPEVSAGQMPGPGEAELTGGSEWTRAQREHEAQKQHSVELWVQFSHAMDALLFRLYLLFMASSIITVICLWNT</sequence>